<sequence length="355" mass="37634">MNTFGKKLTLTSFGESHGVAIGGVIDGLPAGLKIDADFIQSELDKRRPGQSSFTTARDEADKIEIFSGVFDGMSTGAPIGFAIFNNNQKSNDYENLREIFRPGHADLTYFKKYGIRDHRGGGRASARETAVRVAGGAFAQLLLNELKIEVLSGVLGIGKVVSDKIDFDFAQNSQIYALGNEEAMKEAVNKARSEHDSVGAVVLSVARGVPAGLGEPLYDRLDSALAAALMGINGVKAVEIGAGVNVSSMLGSANNDEMDELGFLSNNAGGILGGISSGAEIVLKSHFKPTPSIFKEQKTLNLAGEAVDFELRGRHDPCIGIRGSVVATAMIRLVLADMLLLNASTKLENLKKIYG</sequence>
<dbReference type="EC" id="4.2.3.5" evidence="1"/>
<dbReference type="EMBL" id="CP000792">
    <property type="protein sequence ID" value="ABW74737.1"/>
    <property type="molecule type" value="Genomic_DNA"/>
</dbReference>
<dbReference type="RefSeq" id="WP_048809745.1">
    <property type="nucleotide sequence ID" value="NC_009802.2"/>
</dbReference>
<dbReference type="SMR" id="A8Z6F5"/>
<dbReference type="STRING" id="360104.CCC13826_0791"/>
<dbReference type="KEGG" id="cco:CCC13826_0791"/>
<dbReference type="eggNOG" id="COG0082">
    <property type="taxonomic scope" value="Bacteria"/>
</dbReference>
<dbReference type="HOGENOM" id="CLU_034547_0_2_7"/>
<dbReference type="OrthoDB" id="9771806at2"/>
<dbReference type="UniPathway" id="UPA00053">
    <property type="reaction ID" value="UER00090"/>
</dbReference>
<dbReference type="Proteomes" id="UP000001121">
    <property type="component" value="Chromosome"/>
</dbReference>
<dbReference type="GO" id="GO:0005829">
    <property type="term" value="C:cytosol"/>
    <property type="evidence" value="ECO:0007669"/>
    <property type="project" value="TreeGrafter"/>
</dbReference>
<dbReference type="GO" id="GO:0004107">
    <property type="term" value="F:chorismate synthase activity"/>
    <property type="evidence" value="ECO:0007669"/>
    <property type="project" value="UniProtKB-UniRule"/>
</dbReference>
<dbReference type="GO" id="GO:0010181">
    <property type="term" value="F:FMN binding"/>
    <property type="evidence" value="ECO:0007669"/>
    <property type="project" value="TreeGrafter"/>
</dbReference>
<dbReference type="GO" id="GO:0008652">
    <property type="term" value="P:amino acid biosynthetic process"/>
    <property type="evidence" value="ECO:0007669"/>
    <property type="project" value="UniProtKB-KW"/>
</dbReference>
<dbReference type="GO" id="GO:0009073">
    <property type="term" value="P:aromatic amino acid family biosynthetic process"/>
    <property type="evidence" value="ECO:0007669"/>
    <property type="project" value="UniProtKB-KW"/>
</dbReference>
<dbReference type="GO" id="GO:0009423">
    <property type="term" value="P:chorismate biosynthetic process"/>
    <property type="evidence" value="ECO:0007669"/>
    <property type="project" value="UniProtKB-UniRule"/>
</dbReference>
<dbReference type="CDD" id="cd07304">
    <property type="entry name" value="Chorismate_synthase"/>
    <property type="match status" value="1"/>
</dbReference>
<dbReference type="Gene3D" id="3.60.150.10">
    <property type="entry name" value="Chorismate synthase AroC"/>
    <property type="match status" value="1"/>
</dbReference>
<dbReference type="HAMAP" id="MF_00300">
    <property type="entry name" value="Chorismate_synth"/>
    <property type="match status" value="1"/>
</dbReference>
<dbReference type="InterPro" id="IPR000453">
    <property type="entry name" value="Chorismate_synth"/>
</dbReference>
<dbReference type="InterPro" id="IPR035904">
    <property type="entry name" value="Chorismate_synth_AroC_sf"/>
</dbReference>
<dbReference type="InterPro" id="IPR020541">
    <property type="entry name" value="Chorismate_synthase_CS"/>
</dbReference>
<dbReference type="NCBIfam" id="TIGR00033">
    <property type="entry name" value="aroC"/>
    <property type="match status" value="1"/>
</dbReference>
<dbReference type="NCBIfam" id="NF003793">
    <property type="entry name" value="PRK05382.1"/>
    <property type="match status" value="1"/>
</dbReference>
<dbReference type="PANTHER" id="PTHR21085">
    <property type="entry name" value="CHORISMATE SYNTHASE"/>
    <property type="match status" value="1"/>
</dbReference>
<dbReference type="PANTHER" id="PTHR21085:SF0">
    <property type="entry name" value="CHORISMATE SYNTHASE"/>
    <property type="match status" value="1"/>
</dbReference>
<dbReference type="Pfam" id="PF01264">
    <property type="entry name" value="Chorismate_synt"/>
    <property type="match status" value="1"/>
</dbReference>
<dbReference type="PIRSF" id="PIRSF001456">
    <property type="entry name" value="Chorismate_synth"/>
    <property type="match status" value="1"/>
</dbReference>
<dbReference type="SUPFAM" id="SSF103263">
    <property type="entry name" value="Chorismate synthase, AroC"/>
    <property type="match status" value="1"/>
</dbReference>
<dbReference type="PROSITE" id="PS00787">
    <property type="entry name" value="CHORISMATE_SYNTHASE_1"/>
    <property type="match status" value="1"/>
</dbReference>
<dbReference type="PROSITE" id="PS00788">
    <property type="entry name" value="CHORISMATE_SYNTHASE_2"/>
    <property type="match status" value="1"/>
</dbReference>
<proteinExistence type="inferred from homology"/>
<reference key="1">
    <citation type="submission" date="2007-10" db="EMBL/GenBank/DDBJ databases">
        <title>Genome sequence of Campylobacter concisus 13826 isolated from human feces.</title>
        <authorList>
            <person name="Fouts D.E."/>
            <person name="Mongodin E.F."/>
            <person name="Puiu D."/>
            <person name="Sebastian Y."/>
            <person name="Miller W.G."/>
            <person name="Mandrell R.E."/>
            <person name="On S."/>
            <person name="Nelson K.E."/>
        </authorList>
    </citation>
    <scope>NUCLEOTIDE SEQUENCE [LARGE SCALE GENOMIC DNA]</scope>
    <source>
        <strain>13826</strain>
    </source>
</reference>
<name>AROC_CAMC1</name>
<comment type="function">
    <text evidence="1">Catalyzes the anti-1,4-elimination of the C-3 phosphate and the C-6 proR hydrogen from 5-enolpyruvylshikimate-3-phosphate (EPSP) to yield chorismate, which is the branch point compound that serves as the starting substrate for the three terminal pathways of aromatic amino acid biosynthesis. This reaction introduces a second double bond into the aromatic ring system.</text>
</comment>
<comment type="catalytic activity">
    <reaction evidence="1">
        <text>5-O-(1-carboxyvinyl)-3-phosphoshikimate = chorismate + phosphate</text>
        <dbReference type="Rhea" id="RHEA:21020"/>
        <dbReference type="ChEBI" id="CHEBI:29748"/>
        <dbReference type="ChEBI" id="CHEBI:43474"/>
        <dbReference type="ChEBI" id="CHEBI:57701"/>
        <dbReference type="EC" id="4.2.3.5"/>
    </reaction>
</comment>
<comment type="cofactor">
    <cofactor evidence="1">
        <name>FMNH2</name>
        <dbReference type="ChEBI" id="CHEBI:57618"/>
    </cofactor>
    <text evidence="1">Reduced FMN (FMNH(2)).</text>
</comment>
<comment type="pathway">
    <text evidence="1">Metabolic intermediate biosynthesis; chorismate biosynthesis; chorismate from D-erythrose 4-phosphate and phosphoenolpyruvate: step 7/7.</text>
</comment>
<comment type="subunit">
    <text evidence="1">Homotetramer.</text>
</comment>
<comment type="similarity">
    <text evidence="1">Belongs to the chorismate synthase family.</text>
</comment>
<feature type="chain" id="PRO_1000071968" description="Chorismate synthase">
    <location>
        <begin position="1"/>
        <end position="355"/>
    </location>
</feature>
<feature type="binding site" evidence="1">
    <location>
        <position position="46"/>
    </location>
    <ligand>
        <name>NADP(+)</name>
        <dbReference type="ChEBI" id="CHEBI:58349"/>
    </ligand>
</feature>
<feature type="binding site" evidence="1">
    <location>
        <begin position="123"/>
        <end position="125"/>
    </location>
    <ligand>
        <name>FMN</name>
        <dbReference type="ChEBI" id="CHEBI:58210"/>
    </ligand>
</feature>
<feature type="binding site" evidence="1">
    <location>
        <begin position="233"/>
        <end position="234"/>
    </location>
    <ligand>
        <name>FMN</name>
        <dbReference type="ChEBI" id="CHEBI:58210"/>
    </ligand>
</feature>
<feature type="binding site" evidence="1">
    <location>
        <position position="273"/>
    </location>
    <ligand>
        <name>FMN</name>
        <dbReference type="ChEBI" id="CHEBI:58210"/>
    </ligand>
</feature>
<feature type="binding site" evidence="1">
    <location>
        <begin position="288"/>
        <end position="292"/>
    </location>
    <ligand>
        <name>FMN</name>
        <dbReference type="ChEBI" id="CHEBI:58210"/>
    </ligand>
</feature>
<feature type="binding site" evidence="1">
    <location>
        <position position="314"/>
    </location>
    <ligand>
        <name>FMN</name>
        <dbReference type="ChEBI" id="CHEBI:58210"/>
    </ligand>
</feature>
<accession>A8Z6F5</accession>
<gene>
    <name evidence="1" type="primary">aroC</name>
    <name type="ordered locus">Ccon26_03310</name>
    <name type="ORF">CCC13826_0791</name>
</gene>
<evidence type="ECO:0000255" key="1">
    <source>
        <dbReference type="HAMAP-Rule" id="MF_00300"/>
    </source>
</evidence>
<protein>
    <recommendedName>
        <fullName evidence="1">Chorismate synthase</fullName>
        <shortName evidence="1">CS</shortName>
        <ecNumber evidence="1">4.2.3.5</ecNumber>
    </recommendedName>
    <alternativeName>
        <fullName evidence="1">5-enolpyruvylshikimate-3-phosphate phospholyase</fullName>
    </alternativeName>
</protein>
<organism>
    <name type="scientific">Campylobacter concisus (strain 13826)</name>
    <dbReference type="NCBI Taxonomy" id="360104"/>
    <lineage>
        <taxon>Bacteria</taxon>
        <taxon>Pseudomonadati</taxon>
        <taxon>Campylobacterota</taxon>
        <taxon>Epsilonproteobacteria</taxon>
        <taxon>Campylobacterales</taxon>
        <taxon>Campylobacteraceae</taxon>
        <taxon>Campylobacter</taxon>
    </lineage>
</organism>
<keyword id="KW-0028">Amino-acid biosynthesis</keyword>
<keyword id="KW-0057">Aromatic amino acid biosynthesis</keyword>
<keyword id="KW-0274">FAD</keyword>
<keyword id="KW-0285">Flavoprotein</keyword>
<keyword id="KW-0288">FMN</keyword>
<keyword id="KW-0456">Lyase</keyword>
<keyword id="KW-0521">NADP</keyword>